<sequence length="66" mass="6980">MGQKTALGTLLKAIGNSGQGKVVPGWGAVPIMTVIGLLLLVFLVILLQIYNQSLLLQGFSVDWNGN</sequence>
<protein>
    <recommendedName>
        <fullName evidence="1">Photosystem II reaction center protein H</fullName>
        <shortName evidence="1">PSII-H</shortName>
    </recommendedName>
</protein>
<organism>
    <name type="scientific">Prochlorococcus marinus subsp. pastoris (strain CCMP1986 / NIES-2087 / MED4)</name>
    <dbReference type="NCBI Taxonomy" id="59919"/>
    <lineage>
        <taxon>Bacteria</taxon>
        <taxon>Bacillati</taxon>
        <taxon>Cyanobacteriota</taxon>
        <taxon>Cyanophyceae</taxon>
        <taxon>Synechococcales</taxon>
        <taxon>Prochlorococcaceae</taxon>
        <taxon>Prochlorococcus</taxon>
    </lineage>
</organism>
<name>PSBH_PROMP</name>
<proteinExistence type="inferred from homology"/>
<accession>Q7V341</accession>
<reference key="1">
    <citation type="journal article" date="2003" name="Nature">
        <title>Genome divergence in two Prochlorococcus ecotypes reflects oceanic niche differentiation.</title>
        <authorList>
            <person name="Rocap G."/>
            <person name="Larimer F.W."/>
            <person name="Lamerdin J.E."/>
            <person name="Malfatti S."/>
            <person name="Chain P."/>
            <person name="Ahlgren N.A."/>
            <person name="Arellano A."/>
            <person name="Coleman M."/>
            <person name="Hauser L."/>
            <person name="Hess W.R."/>
            <person name="Johnson Z.I."/>
            <person name="Land M.L."/>
            <person name="Lindell D."/>
            <person name="Post A.F."/>
            <person name="Regala W."/>
            <person name="Shah M."/>
            <person name="Shaw S.L."/>
            <person name="Steglich C."/>
            <person name="Sullivan M.B."/>
            <person name="Ting C.S."/>
            <person name="Tolonen A."/>
            <person name="Webb E.A."/>
            <person name="Zinser E.R."/>
            <person name="Chisholm S.W."/>
        </authorList>
    </citation>
    <scope>NUCLEOTIDE SEQUENCE [LARGE SCALE GENOMIC DNA]</scope>
    <source>
        <strain>CCMP1986 / NIES-2087 / MED4</strain>
    </source>
</reference>
<dbReference type="EMBL" id="BX548174">
    <property type="protein sequence ID" value="CAE18710.1"/>
    <property type="molecule type" value="Genomic_DNA"/>
</dbReference>
<dbReference type="RefSeq" id="WP_011131889.1">
    <property type="nucleotide sequence ID" value="NC_005072.1"/>
</dbReference>
<dbReference type="SMR" id="Q7V341"/>
<dbReference type="STRING" id="59919.PMM0251"/>
<dbReference type="GeneID" id="60200533"/>
<dbReference type="KEGG" id="pmm:PMM0251"/>
<dbReference type="eggNOG" id="ENOG50332MV">
    <property type="taxonomic scope" value="Bacteria"/>
</dbReference>
<dbReference type="HOGENOM" id="CLU_190203_0_0_3"/>
<dbReference type="OrthoDB" id="427121at2"/>
<dbReference type="Proteomes" id="UP000001026">
    <property type="component" value="Chromosome"/>
</dbReference>
<dbReference type="GO" id="GO:0009523">
    <property type="term" value="C:photosystem II"/>
    <property type="evidence" value="ECO:0007669"/>
    <property type="project" value="UniProtKB-KW"/>
</dbReference>
<dbReference type="GO" id="GO:0031676">
    <property type="term" value="C:plasma membrane-derived thylakoid membrane"/>
    <property type="evidence" value="ECO:0007669"/>
    <property type="project" value="UniProtKB-SubCell"/>
</dbReference>
<dbReference type="GO" id="GO:0042301">
    <property type="term" value="F:phosphate ion binding"/>
    <property type="evidence" value="ECO:0007669"/>
    <property type="project" value="InterPro"/>
</dbReference>
<dbReference type="GO" id="GO:0015979">
    <property type="term" value="P:photosynthesis"/>
    <property type="evidence" value="ECO:0007669"/>
    <property type="project" value="UniProtKB-UniRule"/>
</dbReference>
<dbReference type="GO" id="GO:0050821">
    <property type="term" value="P:protein stabilization"/>
    <property type="evidence" value="ECO:0007669"/>
    <property type="project" value="InterPro"/>
</dbReference>
<dbReference type="Gene3D" id="1.20.5.880">
    <property type="entry name" value="Photosystem II reaction center protein H"/>
    <property type="match status" value="1"/>
</dbReference>
<dbReference type="HAMAP" id="MF_00752">
    <property type="entry name" value="PSII_PsbH"/>
    <property type="match status" value="1"/>
</dbReference>
<dbReference type="InterPro" id="IPR001056">
    <property type="entry name" value="PSII_PsbH"/>
</dbReference>
<dbReference type="InterPro" id="IPR036863">
    <property type="entry name" value="PSII_PsbH_sf"/>
</dbReference>
<dbReference type="NCBIfam" id="NF002728">
    <property type="entry name" value="PRK02624.1"/>
    <property type="match status" value="1"/>
</dbReference>
<dbReference type="PANTHER" id="PTHR34469">
    <property type="entry name" value="PHOTOSYSTEM II REACTION CENTER PROTEIN H"/>
    <property type="match status" value="1"/>
</dbReference>
<dbReference type="PANTHER" id="PTHR34469:SF4">
    <property type="entry name" value="PHOTOSYSTEM II REACTION CENTER PROTEIN H"/>
    <property type="match status" value="1"/>
</dbReference>
<dbReference type="Pfam" id="PF00737">
    <property type="entry name" value="PsbH"/>
    <property type="match status" value="1"/>
</dbReference>
<dbReference type="SUPFAM" id="SSF161025">
    <property type="entry name" value="Photosystem II 10 kDa phosphoprotein PsbH"/>
    <property type="match status" value="1"/>
</dbReference>
<gene>
    <name evidence="1" type="primary">psbH</name>
    <name type="ordered locus">PMM0251</name>
</gene>
<evidence type="ECO:0000255" key="1">
    <source>
        <dbReference type="HAMAP-Rule" id="MF_00752"/>
    </source>
</evidence>
<evidence type="ECO:0000305" key="2"/>
<feature type="chain" id="PRO_0000070545" description="Photosystem II reaction center protein H">
    <location>
        <begin position="1"/>
        <end position="66"/>
    </location>
</feature>
<feature type="transmembrane region" description="Helical" evidence="1">
    <location>
        <begin position="27"/>
        <end position="47"/>
    </location>
</feature>
<comment type="function">
    <text evidence="1">One of the components of the core complex of photosystem II (PSII), required for its stability and/or assembly. PSII is a light-driven water:plastoquinone oxidoreductase that uses light energy to abstract electrons from H(2)O, generating O(2) and a proton gradient subsequently used for ATP formation. It consists of a core antenna complex that captures photons, and an electron transfer chain that converts photonic excitation into a charge separation.</text>
</comment>
<comment type="subunit">
    <text evidence="2">PSII is composed of 1 copy each of membrane proteins PsbA, PsbB, PsbC, PsbD, PsbE, PsbF, PsbH, PsbI, PsbJ, PsbK, PsbL, PsbM, PsbT, PsbX, PsbY, Psb30/Ycf12, peripheral proteins PsbO, CyanoQ (PsbQ), PsbU, PsbV and a large number of cofactors. It forms dimeric complexes.</text>
</comment>
<comment type="subcellular location">
    <subcellularLocation>
        <location evidence="1">Cellular thylakoid membrane</location>
        <topology evidence="1">Single-pass membrane protein</topology>
    </subcellularLocation>
</comment>
<comment type="similarity">
    <text evidence="1">Belongs to the PsbH family.</text>
</comment>
<keyword id="KW-0472">Membrane</keyword>
<keyword id="KW-0602">Photosynthesis</keyword>
<keyword id="KW-0604">Photosystem II</keyword>
<keyword id="KW-0793">Thylakoid</keyword>
<keyword id="KW-0812">Transmembrane</keyword>
<keyword id="KW-1133">Transmembrane helix</keyword>